<sequence>MSEIRLFVTTTEKQAAAVLDVMSAIFEEDDYAIATMEIDEKRDVWEASVYMMTDEEESVRSRLAQALEVEFSHLPIEREVLPDVDWIAKSLEGLAPVRAGRFVIHGSHDRDKVKPGEIAIEIDAGQAFGTGHHGTTAGCLEMLASVARSRPVRNALDLGTGSGVLAIAAWKLLHVPVLATDIDPIATRVAADNARRNGVVTGLTFATAPGFHSTTFSTNGPFDLIIANILARPLMKMAPQLVANLAPGGSVILSGILAEQRWKVLAAYNGQNLKHARTLWRNGWVTIHLTR</sequence>
<proteinExistence type="inferred from homology"/>
<name>PRMA_RHIME</name>
<gene>
    <name evidence="1" type="primary">prmA</name>
    <name type="ordered locus">R02155</name>
    <name type="ORF">SMc01472</name>
</gene>
<dbReference type="EC" id="2.1.1.-" evidence="1"/>
<dbReference type="EMBL" id="AL591688">
    <property type="protein sequence ID" value="CAC46734.1"/>
    <property type="molecule type" value="Genomic_DNA"/>
</dbReference>
<dbReference type="RefSeq" id="NP_386261.1">
    <property type="nucleotide sequence ID" value="NC_003047.1"/>
</dbReference>
<dbReference type="RefSeq" id="WP_010969732.1">
    <property type="nucleotide sequence ID" value="NC_003047.1"/>
</dbReference>
<dbReference type="SMR" id="Q92NN5"/>
<dbReference type="EnsemblBacteria" id="CAC46734">
    <property type="protein sequence ID" value="CAC46734"/>
    <property type="gene ID" value="SMc01472"/>
</dbReference>
<dbReference type="KEGG" id="sme:SMc01472"/>
<dbReference type="PATRIC" id="fig|266834.11.peg.3619"/>
<dbReference type="eggNOG" id="COG2264">
    <property type="taxonomic scope" value="Bacteria"/>
</dbReference>
<dbReference type="HOGENOM" id="CLU_049382_3_0_5"/>
<dbReference type="OrthoDB" id="9785995at2"/>
<dbReference type="Proteomes" id="UP000001976">
    <property type="component" value="Chromosome"/>
</dbReference>
<dbReference type="GO" id="GO:0005737">
    <property type="term" value="C:cytoplasm"/>
    <property type="evidence" value="ECO:0007669"/>
    <property type="project" value="UniProtKB-SubCell"/>
</dbReference>
<dbReference type="GO" id="GO:0016279">
    <property type="term" value="F:protein-lysine N-methyltransferase activity"/>
    <property type="evidence" value="ECO:0007669"/>
    <property type="project" value="RHEA"/>
</dbReference>
<dbReference type="GO" id="GO:0032259">
    <property type="term" value="P:methylation"/>
    <property type="evidence" value="ECO:0007669"/>
    <property type="project" value="UniProtKB-KW"/>
</dbReference>
<dbReference type="CDD" id="cd02440">
    <property type="entry name" value="AdoMet_MTases"/>
    <property type="match status" value="1"/>
</dbReference>
<dbReference type="Gene3D" id="3.40.50.150">
    <property type="entry name" value="Vaccinia Virus protein VP39"/>
    <property type="match status" value="1"/>
</dbReference>
<dbReference type="HAMAP" id="MF_00735">
    <property type="entry name" value="Methyltr_PrmA"/>
    <property type="match status" value="1"/>
</dbReference>
<dbReference type="InterPro" id="IPR050078">
    <property type="entry name" value="Ribosomal_L11_MeTrfase_PrmA"/>
</dbReference>
<dbReference type="InterPro" id="IPR004498">
    <property type="entry name" value="Ribosomal_PrmA_MeTrfase"/>
</dbReference>
<dbReference type="InterPro" id="IPR029063">
    <property type="entry name" value="SAM-dependent_MTases_sf"/>
</dbReference>
<dbReference type="NCBIfam" id="NF001784">
    <property type="entry name" value="PRK00517.2-1"/>
    <property type="match status" value="1"/>
</dbReference>
<dbReference type="PANTHER" id="PTHR43648">
    <property type="entry name" value="ELECTRON TRANSFER FLAVOPROTEIN BETA SUBUNIT LYSINE METHYLTRANSFERASE"/>
    <property type="match status" value="1"/>
</dbReference>
<dbReference type="PANTHER" id="PTHR43648:SF1">
    <property type="entry name" value="ELECTRON TRANSFER FLAVOPROTEIN BETA SUBUNIT LYSINE METHYLTRANSFERASE"/>
    <property type="match status" value="1"/>
</dbReference>
<dbReference type="Pfam" id="PF06325">
    <property type="entry name" value="PrmA"/>
    <property type="match status" value="1"/>
</dbReference>
<dbReference type="PIRSF" id="PIRSF000401">
    <property type="entry name" value="RPL11_MTase"/>
    <property type="match status" value="1"/>
</dbReference>
<dbReference type="SUPFAM" id="SSF53335">
    <property type="entry name" value="S-adenosyl-L-methionine-dependent methyltransferases"/>
    <property type="match status" value="1"/>
</dbReference>
<organism>
    <name type="scientific">Rhizobium meliloti (strain 1021)</name>
    <name type="common">Ensifer meliloti</name>
    <name type="synonym">Sinorhizobium meliloti</name>
    <dbReference type="NCBI Taxonomy" id="266834"/>
    <lineage>
        <taxon>Bacteria</taxon>
        <taxon>Pseudomonadati</taxon>
        <taxon>Pseudomonadota</taxon>
        <taxon>Alphaproteobacteria</taxon>
        <taxon>Hyphomicrobiales</taxon>
        <taxon>Rhizobiaceae</taxon>
        <taxon>Sinorhizobium/Ensifer group</taxon>
        <taxon>Sinorhizobium</taxon>
    </lineage>
</organism>
<evidence type="ECO:0000255" key="1">
    <source>
        <dbReference type="HAMAP-Rule" id="MF_00735"/>
    </source>
</evidence>
<protein>
    <recommendedName>
        <fullName evidence="1">Ribosomal protein L11 methyltransferase</fullName>
        <shortName evidence="1">L11 Mtase</shortName>
        <ecNumber evidence="1">2.1.1.-</ecNumber>
    </recommendedName>
</protein>
<reference key="1">
    <citation type="journal article" date="2001" name="Proc. Natl. Acad. Sci. U.S.A.">
        <title>Analysis of the chromosome sequence of the legume symbiont Sinorhizobium meliloti strain 1021.</title>
        <authorList>
            <person name="Capela D."/>
            <person name="Barloy-Hubler F."/>
            <person name="Gouzy J."/>
            <person name="Bothe G."/>
            <person name="Ampe F."/>
            <person name="Batut J."/>
            <person name="Boistard P."/>
            <person name="Becker A."/>
            <person name="Boutry M."/>
            <person name="Cadieu E."/>
            <person name="Dreano S."/>
            <person name="Gloux S."/>
            <person name="Godrie T."/>
            <person name="Goffeau A."/>
            <person name="Kahn D."/>
            <person name="Kiss E."/>
            <person name="Lelaure V."/>
            <person name="Masuy D."/>
            <person name="Pohl T."/>
            <person name="Portetelle D."/>
            <person name="Puehler A."/>
            <person name="Purnelle B."/>
            <person name="Ramsperger U."/>
            <person name="Renard C."/>
            <person name="Thebault P."/>
            <person name="Vandenbol M."/>
            <person name="Weidner S."/>
            <person name="Galibert F."/>
        </authorList>
    </citation>
    <scope>NUCLEOTIDE SEQUENCE [LARGE SCALE GENOMIC DNA]</scope>
    <source>
        <strain>1021</strain>
    </source>
</reference>
<reference key="2">
    <citation type="journal article" date="2001" name="Science">
        <title>The composite genome of the legume symbiont Sinorhizobium meliloti.</title>
        <authorList>
            <person name="Galibert F."/>
            <person name="Finan T.M."/>
            <person name="Long S.R."/>
            <person name="Puehler A."/>
            <person name="Abola P."/>
            <person name="Ampe F."/>
            <person name="Barloy-Hubler F."/>
            <person name="Barnett M.J."/>
            <person name="Becker A."/>
            <person name="Boistard P."/>
            <person name="Bothe G."/>
            <person name="Boutry M."/>
            <person name="Bowser L."/>
            <person name="Buhrmester J."/>
            <person name="Cadieu E."/>
            <person name="Capela D."/>
            <person name="Chain P."/>
            <person name="Cowie A."/>
            <person name="Davis R.W."/>
            <person name="Dreano S."/>
            <person name="Federspiel N.A."/>
            <person name="Fisher R.F."/>
            <person name="Gloux S."/>
            <person name="Godrie T."/>
            <person name="Goffeau A."/>
            <person name="Golding B."/>
            <person name="Gouzy J."/>
            <person name="Gurjal M."/>
            <person name="Hernandez-Lucas I."/>
            <person name="Hong A."/>
            <person name="Huizar L."/>
            <person name="Hyman R.W."/>
            <person name="Jones T."/>
            <person name="Kahn D."/>
            <person name="Kahn M.L."/>
            <person name="Kalman S."/>
            <person name="Keating D.H."/>
            <person name="Kiss E."/>
            <person name="Komp C."/>
            <person name="Lelaure V."/>
            <person name="Masuy D."/>
            <person name="Palm C."/>
            <person name="Peck M.C."/>
            <person name="Pohl T.M."/>
            <person name="Portetelle D."/>
            <person name="Purnelle B."/>
            <person name="Ramsperger U."/>
            <person name="Surzycki R."/>
            <person name="Thebault P."/>
            <person name="Vandenbol M."/>
            <person name="Vorhoelter F.J."/>
            <person name="Weidner S."/>
            <person name="Wells D.H."/>
            <person name="Wong K."/>
            <person name="Yeh K.-C."/>
            <person name="Batut J."/>
        </authorList>
    </citation>
    <scope>NUCLEOTIDE SEQUENCE [LARGE SCALE GENOMIC DNA]</scope>
    <source>
        <strain>1021</strain>
    </source>
</reference>
<comment type="function">
    <text evidence="1">Methylates ribosomal protein L11.</text>
</comment>
<comment type="catalytic activity">
    <reaction evidence="1">
        <text>L-lysyl-[protein] + 3 S-adenosyl-L-methionine = N(6),N(6),N(6)-trimethyl-L-lysyl-[protein] + 3 S-adenosyl-L-homocysteine + 3 H(+)</text>
        <dbReference type="Rhea" id="RHEA:54192"/>
        <dbReference type="Rhea" id="RHEA-COMP:9752"/>
        <dbReference type="Rhea" id="RHEA-COMP:13826"/>
        <dbReference type="ChEBI" id="CHEBI:15378"/>
        <dbReference type="ChEBI" id="CHEBI:29969"/>
        <dbReference type="ChEBI" id="CHEBI:57856"/>
        <dbReference type="ChEBI" id="CHEBI:59789"/>
        <dbReference type="ChEBI" id="CHEBI:61961"/>
    </reaction>
</comment>
<comment type="subcellular location">
    <subcellularLocation>
        <location evidence="1">Cytoplasm</location>
    </subcellularLocation>
</comment>
<comment type="similarity">
    <text evidence="1">Belongs to the methyltransferase superfamily. PrmA family.</text>
</comment>
<keyword id="KW-0963">Cytoplasm</keyword>
<keyword id="KW-0489">Methyltransferase</keyword>
<keyword id="KW-1185">Reference proteome</keyword>
<keyword id="KW-0949">S-adenosyl-L-methionine</keyword>
<keyword id="KW-0808">Transferase</keyword>
<feature type="chain" id="PRO_0000192297" description="Ribosomal protein L11 methyltransferase">
    <location>
        <begin position="1"/>
        <end position="291"/>
    </location>
</feature>
<feature type="binding site" evidence="1">
    <location>
        <position position="136"/>
    </location>
    <ligand>
        <name>S-adenosyl-L-methionine</name>
        <dbReference type="ChEBI" id="CHEBI:59789"/>
    </ligand>
</feature>
<feature type="binding site" evidence="1">
    <location>
        <position position="159"/>
    </location>
    <ligand>
        <name>S-adenosyl-L-methionine</name>
        <dbReference type="ChEBI" id="CHEBI:59789"/>
    </ligand>
</feature>
<feature type="binding site" evidence="1">
    <location>
        <position position="181"/>
    </location>
    <ligand>
        <name>S-adenosyl-L-methionine</name>
        <dbReference type="ChEBI" id="CHEBI:59789"/>
    </ligand>
</feature>
<feature type="binding site" evidence="1">
    <location>
        <position position="228"/>
    </location>
    <ligand>
        <name>S-adenosyl-L-methionine</name>
        <dbReference type="ChEBI" id="CHEBI:59789"/>
    </ligand>
</feature>
<accession>Q92NN5</accession>